<keyword id="KW-0066">ATP synthesis</keyword>
<keyword id="KW-0067">ATP-binding</keyword>
<keyword id="KW-0139">CF(1)</keyword>
<keyword id="KW-0150">Chloroplast</keyword>
<keyword id="KW-0375">Hydrogen ion transport</keyword>
<keyword id="KW-0406">Ion transport</keyword>
<keyword id="KW-0472">Membrane</keyword>
<keyword id="KW-0547">Nucleotide-binding</keyword>
<keyword id="KW-0934">Plastid</keyword>
<keyword id="KW-0793">Thylakoid</keyword>
<keyword id="KW-1278">Translocase</keyword>
<keyword id="KW-0813">Transport</keyword>
<name>ATPB_BRASC</name>
<feature type="chain" id="PRO_0000144502" description="ATP synthase subunit beta, chloroplastic">
    <location>
        <begin position="1"/>
        <end position="498"/>
    </location>
</feature>
<feature type="binding site" evidence="1">
    <location>
        <begin position="172"/>
        <end position="179"/>
    </location>
    <ligand>
        <name>ATP</name>
        <dbReference type="ChEBI" id="CHEBI:30616"/>
    </ligand>
</feature>
<organism>
    <name type="scientific">Brasenia schreberi</name>
    <name type="common">Water shield</name>
    <dbReference type="NCBI Taxonomy" id="4424"/>
    <lineage>
        <taxon>Eukaryota</taxon>
        <taxon>Viridiplantae</taxon>
        <taxon>Streptophyta</taxon>
        <taxon>Embryophyta</taxon>
        <taxon>Tracheophyta</taxon>
        <taxon>Spermatophyta</taxon>
        <taxon>Magnoliopsida</taxon>
        <taxon>Nymphaeales</taxon>
        <taxon>Cabombaceae</taxon>
        <taxon>Brasenia</taxon>
    </lineage>
</organism>
<gene>
    <name evidence="1" type="primary">atpB</name>
</gene>
<evidence type="ECO:0000255" key="1">
    <source>
        <dbReference type="HAMAP-Rule" id="MF_01347"/>
    </source>
</evidence>
<dbReference type="EC" id="7.1.2.2" evidence="1"/>
<dbReference type="EMBL" id="AJ235418">
    <property type="protein sequence ID" value="CAB89702.1"/>
    <property type="molecule type" value="Genomic_DNA"/>
</dbReference>
<dbReference type="EMBL" id="AF209544">
    <property type="protein sequence ID" value="AAK72726.1"/>
    <property type="molecule type" value="Genomic_DNA"/>
</dbReference>
<dbReference type="GO" id="GO:0009535">
    <property type="term" value="C:chloroplast thylakoid membrane"/>
    <property type="evidence" value="ECO:0007669"/>
    <property type="project" value="UniProtKB-SubCell"/>
</dbReference>
<dbReference type="GO" id="GO:0005739">
    <property type="term" value="C:mitochondrion"/>
    <property type="evidence" value="ECO:0007669"/>
    <property type="project" value="GOC"/>
</dbReference>
<dbReference type="GO" id="GO:0045259">
    <property type="term" value="C:proton-transporting ATP synthase complex"/>
    <property type="evidence" value="ECO:0007669"/>
    <property type="project" value="UniProtKB-KW"/>
</dbReference>
<dbReference type="GO" id="GO:0005524">
    <property type="term" value="F:ATP binding"/>
    <property type="evidence" value="ECO:0007669"/>
    <property type="project" value="UniProtKB-UniRule"/>
</dbReference>
<dbReference type="GO" id="GO:0016887">
    <property type="term" value="F:ATP hydrolysis activity"/>
    <property type="evidence" value="ECO:0007669"/>
    <property type="project" value="InterPro"/>
</dbReference>
<dbReference type="GO" id="GO:0046933">
    <property type="term" value="F:proton-transporting ATP synthase activity, rotational mechanism"/>
    <property type="evidence" value="ECO:0007669"/>
    <property type="project" value="UniProtKB-UniRule"/>
</dbReference>
<dbReference type="GO" id="GO:0042776">
    <property type="term" value="P:proton motive force-driven mitochondrial ATP synthesis"/>
    <property type="evidence" value="ECO:0007669"/>
    <property type="project" value="TreeGrafter"/>
</dbReference>
<dbReference type="CDD" id="cd18110">
    <property type="entry name" value="ATP-synt_F1_beta_C"/>
    <property type="match status" value="1"/>
</dbReference>
<dbReference type="CDD" id="cd18115">
    <property type="entry name" value="ATP-synt_F1_beta_N"/>
    <property type="match status" value="1"/>
</dbReference>
<dbReference type="CDD" id="cd01133">
    <property type="entry name" value="F1-ATPase_beta_CD"/>
    <property type="match status" value="1"/>
</dbReference>
<dbReference type="FunFam" id="1.10.1140.10:FF:000001">
    <property type="entry name" value="ATP synthase subunit beta"/>
    <property type="match status" value="1"/>
</dbReference>
<dbReference type="FunFam" id="3.40.50.12240:FF:000006">
    <property type="entry name" value="ATP synthase subunit beta"/>
    <property type="match status" value="1"/>
</dbReference>
<dbReference type="FunFam" id="3.40.50.300:FF:000004">
    <property type="entry name" value="ATP synthase subunit beta"/>
    <property type="match status" value="1"/>
</dbReference>
<dbReference type="FunFam" id="2.40.10.170:FF:000002">
    <property type="entry name" value="ATP synthase subunit beta, chloroplastic"/>
    <property type="match status" value="1"/>
</dbReference>
<dbReference type="Gene3D" id="2.40.10.170">
    <property type="match status" value="1"/>
</dbReference>
<dbReference type="Gene3D" id="1.10.1140.10">
    <property type="entry name" value="Bovine Mitochondrial F1-atpase, Atp Synthase Beta Chain, Chain D, domain 3"/>
    <property type="match status" value="1"/>
</dbReference>
<dbReference type="Gene3D" id="3.40.50.300">
    <property type="entry name" value="P-loop containing nucleotide triphosphate hydrolases"/>
    <property type="match status" value="1"/>
</dbReference>
<dbReference type="HAMAP" id="MF_01347">
    <property type="entry name" value="ATP_synth_beta_bact"/>
    <property type="match status" value="1"/>
</dbReference>
<dbReference type="InterPro" id="IPR003593">
    <property type="entry name" value="AAA+_ATPase"/>
</dbReference>
<dbReference type="InterPro" id="IPR055190">
    <property type="entry name" value="ATP-synt_VA_C"/>
</dbReference>
<dbReference type="InterPro" id="IPR005722">
    <property type="entry name" value="ATP_synth_F1_bsu"/>
</dbReference>
<dbReference type="InterPro" id="IPR020003">
    <property type="entry name" value="ATPase_a/bsu_AS"/>
</dbReference>
<dbReference type="InterPro" id="IPR050053">
    <property type="entry name" value="ATPase_alpha/beta_chains"/>
</dbReference>
<dbReference type="InterPro" id="IPR004100">
    <property type="entry name" value="ATPase_F1/V1/A1_a/bsu_N"/>
</dbReference>
<dbReference type="InterPro" id="IPR036121">
    <property type="entry name" value="ATPase_F1/V1/A1_a/bsu_N_sf"/>
</dbReference>
<dbReference type="InterPro" id="IPR000194">
    <property type="entry name" value="ATPase_F1/V1/A1_a/bsu_nucl-bd"/>
</dbReference>
<dbReference type="InterPro" id="IPR024034">
    <property type="entry name" value="ATPase_F1/V1_b/a_C"/>
</dbReference>
<dbReference type="InterPro" id="IPR027417">
    <property type="entry name" value="P-loop_NTPase"/>
</dbReference>
<dbReference type="NCBIfam" id="TIGR01039">
    <property type="entry name" value="atpD"/>
    <property type="match status" value="1"/>
</dbReference>
<dbReference type="PANTHER" id="PTHR15184">
    <property type="entry name" value="ATP SYNTHASE"/>
    <property type="match status" value="1"/>
</dbReference>
<dbReference type="PANTHER" id="PTHR15184:SF71">
    <property type="entry name" value="ATP SYNTHASE SUBUNIT BETA, MITOCHONDRIAL"/>
    <property type="match status" value="1"/>
</dbReference>
<dbReference type="Pfam" id="PF00006">
    <property type="entry name" value="ATP-synt_ab"/>
    <property type="match status" value="1"/>
</dbReference>
<dbReference type="Pfam" id="PF02874">
    <property type="entry name" value="ATP-synt_ab_N"/>
    <property type="match status" value="1"/>
</dbReference>
<dbReference type="Pfam" id="PF22919">
    <property type="entry name" value="ATP-synt_VA_C"/>
    <property type="match status" value="1"/>
</dbReference>
<dbReference type="SMART" id="SM00382">
    <property type="entry name" value="AAA"/>
    <property type="match status" value="1"/>
</dbReference>
<dbReference type="SUPFAM" id="SSF47917">
    <property type="entry name" value="C-terminal domain of alpha and beta subunits of F1 ATP synthase"/>
    <property type="match status" value="1"/>
</dbReference>
<dbReference type="SUPFAM" id="SSF50615">
    <property type="entry name" value="N-terminal domain of alpha and beta subunits of F1 ATP synthase"/>
    <property type="match status" value="1"/>
</dbReference>
<dbReference type="SUPFAM" id="SSF52540">
    <property type="entry name" value="P-loop containing nucleoside triphosphate hydrolases"/>
    <property type="match status" value="1"/>
</dbReference>
<dbReference type="PROSITE" id="PS00152">
    <property type="entry name" value="ATPASE_ALPHA_BETA"/>
    <property type="match status" value="1"/>
</dbReference>
<geneLocation type="chloroplast"/>
<proteinExistence type="inferred from homology"/>
<accession>Q9MRR9</accession>
<reference key="1">
    <citation type="journal article" date="2000" name="Syst. Biol.">
        <title>Phylogenetics of flowering plants based upon a combined analysis of plastid atpB and rbcL gene sequences.</title>
        <authorList>
            <person name="Savolainen V."/>
            <person name="Chase M.W."/>
            <person name="Morton C.M."/>
            <person name="Hoot S.B."/>
            <person name="Soltis D.E."/>
            <person name="Bayer C."/>
            <person name="Fay M.F."/>
            <person name="de Bruijn A."/>
            <person name="Sullivan S."/>
            <person name="Qiu Y.-L."/>
        </authorList>
    </citation>
    <scope>NUCLEOTIDE SEQUENCE [GENOMIC DNA]</scope>
    <source>
        <strain>Isolate Qiu 91031 NCU</strain>
    </source>
</reference>
<reference key="2">
    <citation type="journal article" date="1999" name="Nature">
        <title>Angiosperm phylogeny inferred from multiple genes as a tool for comparative biology.</title>
        <authorList>
            <person name="Soltis P.S."/>
            <person name="Soltis D.E."/>
            <person name="Chase M.W."/>
        </authorList>
    </citation>
    <scope>NUCLEOTIDE SEQUENCE [GENOMIC DNA]</scope>
</reference>
<sequence length="498" mass="53700">MRINPTTSXPGVSTLGKKIPGRIAQIIGPVLDVAFPPGKMPNIYNSLVVXGRDTAGQQINVTCEVQQLLGNNRVRAVAMSATDGLTRGMEVIDTGAPLSVPVGGCTLGRIFNVLGEPVDNLGPVDTRTTSPIHRSAPAFIQLDTKLSIFETGIKVVDLLAPYRRGGKIGLFGGAGVGKTVLIMELINNIAKAHGGVSVFGGVGERTREGNDLYMEMKESGVINEENIAESKVALVYGQMNEPPGARMRVGLTALTMAEYFRDVNEQDVLLFIDNIFRFVQAGSEVSALLGRMPSAVGYQPTLSTEMGSLQERITSTKEGSITSIQAVYVPADDLTDPAPATTFAHLDATTVLSRGLAAKGIYPAVDPLDSTSTMLQPRIVGEEHYETAQRVKQTLQRYKELQDIIAILGLDELSEEDRLTVARARKIERFLSQPFFVAEVFTGSPGKYVGLAETIRGFQLILSGELDSFPEQAFYLVGNIDETTAKAMNLEVESNLKK</sequence>
<protein>
    <recommendedName>
        <fullName evidence="1">ATP synthase subunit beta, chloroplastic</fullName>
        <ecNumber evidence="1">7.1.2.2</ecNumber>
    </recommendedName>
    <alternativeName>
        <fullName evidence="1">ATP synthase F1 sector subunit beta</fullName>
    </alternativeName>
    <alternativeName>
        <fullName evidence="1">F-ATPase subunit beta</fullName>
    </alternativeName>
</protein>
<comment type="function">
    <text evidence="1">Produces ATP from ADP in the presence of a proton gradient across the membrane. The catalytic sites are hosted primarily by the beta subunits.</text>
</comment>
<comment type="catalytic activity">
    <reaction evidence="1">
        <text>ATP + H2O + 4 H(+)(in) = ADP + phosphate + 5 H(+)(out)</text>
        <dbReference type="Rhea" id="RHEA:57720"/>
        <dbReference type="ChEBI" id="CHEBI:15377"/>
        <dbReference type="ChEBI" id="CHEBI:15378"/>
        <dbReference type="ChEBI" id="CHEBI:30616"/>
        <dbReference type="ChEBI" id="CHEBI:43474"/>
        <dbReference type="ChEBI" id="CHEBI:456216"/>
        <dbReference type="EC" id="7.1.2.2"/>
    </reaction>
</comment>
<comment type="subunit">
    <text evidence="1">F-type ATPases have 2 components, CF(1) - the catalytic core - and CF(0) - the membrane proton channel. CF(1) has five subunits: alpha(3), beta(3), gamma(1), delta(1), epsilon(1). CF(0) has four main subunits: a(1), b(1), b'(1) and c(9-12).</text>
</comment>
<comment type="subcellular location">
    <subcellularLocation>
        <location evidence="1">Plastid</location>
        <location evidence="1">Chloroplast thylakoid membrane</location>
        <topology evidence="1">Peripheral membrane protein</topology>
    </subcellularLocation>
</comment>
<comment type="similarity">
    <text evidence="1">Belongs to the ATPase alpha/beta chains family.</text>
</comment>